<protein>
    <recommendedName>
        <fullName>Leucine-rich repeat-containing protein 37A2</fullName>
    </recommendedName>
</protein>
<gene>
    <name type="primary">LRRC37A2</name>
</gene>
<sequence>MSSAQCPALVCVMSRLRFWGPWPLLMWQLLWLLVKEAQPLEWVKDPLQLTSNPLGPPDSWSSHSSHFPRESPHAPTLPADPWDFDHLGPSASSEMPAPPQESTENLVPFLDTWDSAGEQPLEPEQFLASQQDLKDKLSPQERLPVSPKKLKKDPAQRWSLAEIIGITRQLSTPQSQKQTLQNEYSSTDTPYPGSLPPELRVKSDEPPGPSEQVGPSQFHLEPETQNPETLEDIQSSSLQQEAPAQLPQLLEEEPSSMQQEAPALPPESSMESLTLPNHEVSVQPPGEDQAYYHLPNITVKPADVEVTITSEPTNETESSQAQQETPIQFPEEVEPSATQQEAPIEPPVPPMEHELSISEQQQPVQPSESPREVESSPTQQETPGQPPEHHEVTVSPPGHHQTHHLASPSVSVKPPDVQLTIAAEPSAEVGTSLVHQEATTRLSGSGNDVEPPAIQHGGPPLLPESSEEAGPLAVQQETSFQSPEPINNENPSPTQQEAAAEHPQTAEEGESSLTHQEAPAQTPEFPNVVVAQPPEHSHLTQATVQPLDLGFTITPESKTEVELSPTMKETPTQPPKKVVPQLRVYQGVTNPTPGQDQAQHPVSPSVTVQLLDLGLTITPEPTTEVGHSTPPKRTIVSPKHPEVTLPHPDQVQTQHSHLTRATVQPLDLGFTITPKSMTEVEPSTALMTTAPPPGHPEVTLPPSDKGQAQHSHLTQATVQPLDLELTITTKPTTEVKPSPTTEETSTQPPDLGLAIIPEPTTETRHSTALEKTTAPRPDRVQTLHRSLTEVTGPPTELEPAQDSLVQSESYTQNKALTAPEEHKASTSTNICELCTCGDEMLSCIDLNPEQRLRQVPVPEPNTHNGTFTILNFQGNYISYIDGNVWKAYSWTEKLILRENNLTELHKDSFEGLLSLQYLDLSCNKIQSIERHTFEPLPFLKFINLSCNVITELSFGTFQAWHGMQFLHKLILNHNPLTTVEDPYLFKLPALKYLDMGTTLVPLTTLKNILMMTVELEKLILPSHMACCLCQFKNSIEAVCKTVKLHCNSACLTNTTHCPEEASVGNPEGAFMKVLQARKNYTSTELIVEPEEPSDSSGINLSGFGSEQLDTNDESDFISTLSYILPYFSAVNLDVKSLLLPFIKLPTTGNSLAKIQTVGQNRQRVKRVLMGPRSIQKRHFKEVGRQSIRREQGAQASVENAAEEKRLGSPAPREVEQPHTQQGPEKLAGNAVYTKPSFTQEHKAAVSVLKPFSKGAPSTSSPAKALPQVRDRWKDLTHAISILESAKARVTNTKTSKPIVHARKKYRFHKTRSHVTHRTPKVKKSPKVRKKSYLSRLMLANRLPFSAAKSLINSPSQGAFSSLGDLSPQENPFLEVSAPSEHFIENNNTKHTTARNAFEENDFMENTNMPEGTISENTNYNHPHEADSAGTAFNLGPTVKQTETKWEYNNVGTDLSPEPKSFNYPLLSSPGDQFEIQLTQQLQSLIPNNNVRRLIAHVIRTLKMDCSGAHVQVTCAKLISRTGHLMKLLSGQQEVKASKIEWDTDQWKIENYINESTEAQSEQKEKSLELKKEVPGYGYTDKLILALIVTGILTILIILFCLIVICCHRRSLQEDEEGFSRGIFRFLPWRGCSSRRESQDGLSSFGQPLWFKDMYKPLSATRINNHAWKLHKKSSNEDKILNRDPGDSEAPTEEEESEALP</sequence>
<dbReference type="EMBL" id="AC138645">
    <property type="status" value="NOT_ANNOTATED_CDS"/>
    <property type="molecule type" value="Genomic_DNA"/>
</dbReference>
<dbReference type="EMBL" id="BC144427">
    <property type="protein sequence ID" value="AAI44428.1"/>
    <property type="molecule type" value="mRNA"/>
</dbReference>
<dbReference type="CCDS" id="CCDS42353.1"/>
<dbReference type="RefSeq" id="NP_001006608.2">
    <property type="nucleotide sequence ID" value="NM_001006607.3"/>
</dbReference>
<dbReference type="SMR" id="A6NM11"/>
<dbReference type="BioGRID" id="138737">
    <property type="interactions" value="11"/>
</dbReference>
<dbReference type="FunCoup" id="A6NM11">
    <property type="interactions" value="15"/>
</dbReference>
<dbReference type="IntAct" id="A6NM11">
    <property type="interactions" value="11"/>
</dbReference>
<dbReference type="STRING" id="9606.ENSP00000459551"/>
<dbReference type="GlyCosmos" id="A6NM11">
    <property type="glycosylation" value="2 sites, No reported glycans"/>
</dbReference>
<dbReference type="GlyGen" id="A6NM11">
    <property type="glycosylation" value="4 sites"/>
</dbReference>
<dbReference type="iPTMnet" id="A6NM11"/>
<dbReference type="PhosphoSitePlus" id="A6NM11"/>
<dbReference type="BioMuta" id="LRRC37A2"/>
<dbReference type="jPOST" id="A6NM11"/>
<dbReference type="MassIVE" id="A6NM11"/>
<dbReference type="PaxDb" id="9606-ENSP00000459551"/>
<dbReference type="PeptideAtlas" id="A6NM11"/>
<dbReference type="ProteomicsDB" id="1505"/>
<dbReference type="Antibodypedia" id="70905">
    <property type="antibodies" value="9 antibodies from 4 providers"/>
</dbReference>
<dbReference type="DNASU" id="474170"/>
<dbReference type="Ensembl" id="ENST00000576629.6">
    <property type="protein sequence ID" value="ENSP00000459551.1"/>
    <property type="gene ID" value="ENSG00000238083.10"/>
</dbReference>
<dbReference type="GeneID" id="474170"/>
<dbReference type="KEGG" id="hsa:474170"/>
<dbReference type="MANE-Select" id="ENST00000576629.6">
    <property type="protein sequence ID" value="ENSP00000459551.1"/>
    <property type="RefSeq nucleotide sequence ID" value="NM_001006607.3"/>
    <property type="RefSeq protein sequence ID" value="NP_001006608.2"/>
</dbReference>
<dbReference type="UCSC" id="uc002ikn.2">
    <property type="organism name" value="human"/>
</dbReference>
<dbReference type="AGR" id="HGNC:32404"/>
<dbReference type="CTD" id="474170"/>
<dbReference type="DisGeNET" id="474170"/>
<dbReference type="GeneCards" id="LRRC37A2"/>
<dbReference type="HGNC" id="HGNC:32404">
    <property type="gene designation" value="LRRC37A2"/>
</dbReference>
<dbReference type="HPA" id="ENSG00000238083">
    <property type="expression patterns" value="Tissue enriched (testis)"/>
</dbReference>
<dbReference type="MalaCards" id="LRRC37A2"/>
<dbReference type="MIM" id="616556">
    <property type="type" value="gene"/>
</dbReference>
<dbReference type="neXtProt" id="NX_A6NM11"/>
<dbReference type="PharmGKB" id="PA162394530"/>
<dbReference type="VEuPathDB" id="HostDB:ENSG00000238083"/>
<dbReference type="eggNOG" id="KOG0619">
    <property type="taxonomic scope" value="Eukaryota"/>
</dbReference>
<dbReference type="GeneTree" id="ENSGT00530000063282"/>
<dbReference type="HOGENOM" id="CLU_003362_0_0_1"/>
<dbReference type="InParanoid" id="A6NM11"/>
<dbReference type="OMA" id="DIVNNHA"/>
<dbReference type="OrthoDB" id="9537879at2759"/>
<dbReference type="PAN-GO" id="A6NM11">
    <property type="GO annotations" value="0 GO annotations based on evolutionary models"/>
</dbReference>
<dbReference type="PhylomeDB" id="A6NM11"/>
<dbReference type="TreeFam" id="TF341959"/>
<dbReference type="PathwayCommons" id="A6NM11"/>
<dbReference type="SignaLink" id="A6NM11"/>
<dbReference type="BioGRID-ORCS" id="474170">
    <property type="hits" value="17 hits in 695 CRISPR screens"/>
</dbReference>
<dbReference type="ChiTaRS" id="LRRC37A2">
    <property type="organism name" value="human"/>
</dbReference>
<dbReference type="GenomeRNAi" id="474170"/>
<dbReference type="Pharos" id="A6NM11">
    <property type="development level" value="Tdark"/>
</dbReference>
<dbReference type="PRO" id="PR:A6NM11"/>
<dbReference type="Proteomes" id="UP000005640">
    <property type="component" value="Chromosome 17"/>
</dbReference>
<dbReference type="RNAct" id="A6NM11">
    <property type="molecule type" value="protein"/>
</dbReference>
<dbReference type="Bgee" id="ENSG00000238083">
    <property type="expression patterns" value="Expressed in right uterine tube and 95 other cell types or tissues"/>
</dbReference>
<dbReference type="GO" id="GO:0016020">
    <property type="term" value="C:membrane"/>
    <property type="evidence" value="ECO:0007669"/>
    <property type="project" value="UniProtKB-SubCell"/>
</dbReference>
<dbReference type="Gene3D" id="3.80.10.10">
    <property type="entry name" value="Ribonuclease Inhibitor"/>
    <property type="match status" value="1"/>
</dbReference>
<dbReference type="InterPro" id="IPR001611">
    <property type="entry name" value="Leu-rich_rpt"/>
</dbReference>
<dbReference type="InterPro" id="IPR003591">
    <property type="entry name" value="Leu-rich_rpt_typical-subtyp"/>
</dbReference>
<dbReference type="InterPro" id="IPR032675">
    <property type="entry name" value="LRR_dom_sf"/>
</dbReference>
<dbReference type="InterPro" id="IPR015753">
    <property type="entry name" value="LRRC37"/>
</dbReference>
<dbReference type="InterPro" id="IPR032754">
    <property type="entry name" value="LRRC37_N"/>
</dbReference>
<dbReference type="InterPro" id="IPR029423">
    <property type="entry name" value="LRRC37AB_C"/>
</dbReference>
<dbReference type="PANTHER" id="PTHR23045">
    <property type="entry name" value="LEUCINE-RICH REPEAT-CONTAINING PROTEIN 37A"/>
    <property type="match status" value="1"/>
</dbReference>
<dbReference type="PANTHER" id="PTHR23045:SF19">
    <property type="entry name" value="LEUCINE-RICH REPEAT-CONTAINING PROTEIN 37A-RELATED"/>
    <property type="match status" value="1"/>
</dbReference>
<dbReference type="Pfam" id="PF13855">
    <property type="entry name" value="LRR_8"/>
    <property type="match status" value="1"/>
</dbReference>
<dbReference type="Pfam" id="PF15779">
    <property type="entry name" value="LRRC37"/>
    <property type="match status" value="7"/>
</dbReference>
<dbReference type="Pfam" id="PF14914">
    <property type="entry name" value="LRRC37AB_C"/>
    <property type="match status" value="1"/>
</dbReference>
<dbReference type="SMART" id="SM00369">
    <property type="entry name" value="LRR_TYP"/>
    <property type="match status" value="4"/>
</dbReference>
<dbReference type="SUPFAM" id="SSF52058">
    <property type="entry name" value="L domain-like"/>
    <property type="match status" value="1"/>
</dbReference>
<dbReference type="PROSITE" id="PS51450">
    <property type="entry name" value="LRR"/>
    <property type="match status" value="4"/>
</dbReference>
<name>L37A2_HUMAN</name>
<proteinExistence type="evidence at protein level"/>
<comment type="subcellular location">
    <subcellularLocation>
        <location evidence="4">Membrane</location>
        <topology evidence="4">Single-pass type I membrane protein</topology>
    </subcellularLocation>
</comment>
<comment type="similarity">
    <text evidence="4">Belongs to the LRRC37A family.</text>
</comment>
<feature type="signal peptide" evidence="1">
    <location>
        <begin position="1"/>
        <end position="35"/>
    </location>
</feature>
<feature type="chain" id="PRO_0000337080" description="Leucine-rich repeat-containing protein 37A2">
    <location>
        <begin position="36"/>
        <end position="1700"/>
    </location>
</feature>
<feature type="topological domain" description="Extracellular" evidence="1">
    <location>
        <begin position="36"/>
        <end position="1582"/>
    </location>
</feature>
<feature type="transmembrane region" description="Helical" evidence="1">
    <location>
        <begin position="1583"/>
        <end position="1603"/>
    </location>
</feature>
<feature type="topological domain" description="Cytoplasmic" evidence="1">
    <location>
        <begin position="1604"/>
        <end position="1700"/>
    </location>
</feature>
<feature type="repeat" description="LRR 1">
    <location>
        <begin position="137"/>
        <end position="160"/>
    </location>
</feature>
<feature type="repeat" description="LRR 2">
    <location>
        <begin position="230"/>
        <end position="253"/>
    </location>
</feature>
<feature type="repeat" description="LRR 3">
    <location>
        <begin position="267"/>
        <end position="290"/>
    </location>
</feature>
<feature type="repeat" description="LRR 4">
    <location>
        <begin position="864"/>
        <end position="887"/>
    </location>
</feature>
<feature type="repeat" description="LRR 5">
    <location>
        <begin position="888"/>
        <end position="911"/>
    </location>
</feature>
<feature type="repeat" description="LRR 6">
    <location>
        <begin position="912"/>
        <end position="935"/>
    </location>
</feature>
<feature type="repeat" description="LRR 7">
    <location>
        <begin position="937"/>
        <end position="959"/>
    </location>
</feature>
<feature type="repeat" description="LRR 8">
    <location>
        <begin position="963"/>
        <end position="987"/>
    </location>
</feature>
<feature type="repeat" description="LRR 9">
    <location>
        <begin position="1002"/>
        <end position="1027"/>
    </location>
</feature>
<feature type="repeat" description="LRR 10">
    <location>
        <begin position="1124"/>
        <end position="1146"/>
    </location>
</feature>
<feature type="region of interest" description="Disordered" evidence="2">
    <location>
        <begin position="54"/>
        <end position="104"/>
    </location>
</feature>
<feature type="region of interest" description="Disordered" evidence="2">
    <location>
        <begin position="130"/>
        <end position="156"/>
    </location>
</feature>
<feature type="region of interest" description="Disordered" evidence="2">
    <location>
        <begin position="169"/>
        <end position="534"/>
    </location>
</feature>
<feature type="region of interest" description="Disordered" evidence="2">
    <location>
        <begin position="559"/>
        <end position="580"/>
    </location>
</feature>
<feature type="region of interest" description="Disordered" evidence="2">
    <location>
        <begin position="619"/>
        <end position="642"/>
    </location>
</feature>
<feature type="region of interest" description="Disordered" evidence="2">
    <location>
        <begin position="729"/>
        <end position="752"/>
    </location>
</feature>
<feature type="region of interest" description="Disordered" evidence="2">
    <location>
        <begin position="1182"/>
        <end position="1227"/>
    </location>
</feature>
<feature type="region of interest" description="Disordered" evidence="2">
    <location>
        <begin position="1309"/>
        <end position="1328"/>
    </location>
</feature>
<feature type="region of interest" description="Disordered" evidence="2">
    <location>
        <begin position="1675"/>
        <end position="1700"/>
    </location>
</feature>
<feature type="compositionally biased region" description="Polar residues" evidence="2">
    <location>
        <begin position="54"/>
        <end position="65"/>
    </location>
</feature>
<feature type="compositionally biased region" description="Polar residues" evidence="2">
    <location>
        <begin position="169"/>
        <end position="189"/>
    </location>
</feature>
<feature type="compositionally biased region" description="Polar residues" evidence="2">
    <location>
        <begin position="223"/>
        <end position="237"/>
    </location>
</feature>
<feature type="compositionally biased region" description="Low complexity" evidence="2">
    <location>
        <begin position="238"/>
        <end position="249"/>
    </location>
</feature>
<feature type="compositionally biased region" description="Polar residues" evidence="2">
    <location>
        <begin position="307"/>
        <end position="326"/>
    </location>
</feature>
<feature type="compositionally biased region" description="Low complexity" evidence="2">
    <location>
        <begin position="358"/>
        <end position="368"/>
    </location>
</feature>
<feature type="compositionally biased region" description="Polar residues" evidence="2">
    <location>
        <begin position="433"/>
        <end position="446"/>
    </location>
</feature>
<feature type="compositionally biased region" description="Low complexity" evidence="2">
    <location>
        <begin position="482"/>
        <end position="493"/>
    </location>
</feature>
<feature type="compositionally biased region" description="Low complexity" evidence="2">
    <location>
        <begin position="729"/>
        <end position="749"/>
    </location>
</feature>
<feature type="compositionally biased region" description="Basic and acidic residues" evidence="2">
    <location>
        <begin position="1182"/>
        <end position="1191"/>
    </location>
</feature>
<feature type="compositionally biased region" description="Basic and acidic residues" evidence="2">
    <location>
        <begin position="1201"/>
        <end position="1216"/>
    </location>
</feature>
<feature type="compositionally biased region" description="Basic and acidic residues" evidence="2">
    <location>
        <begin position="1675"/>
        <end position="1685"/>
    </location>
</feature>
<feature type="compositionally biased region" description="Acidic residues" evidence="2">
    <location>
        <begin position="1689"/>
        <end position="1700"/>
    </location>
</feature>
<feature type="glycosylation site" description="N-linked (GlcNAc...) asparagine" evidence="1">
    <location>
        <position position="296"/>
    </location>
</feature>
<feature type="glycosylation site" description="N-linked (GlcNAc...) asparagine" evidence="1">
    <location>
        <position position="1079"/>
    </location>
</feature>
<feature type="sequence variant" id="VAR_070799" description="In dbSNP:rs1863115." evidence="3">
    <original>F</original>
    <variation>L</variation>
    <location>
        <position position="1141"/>
    </location>
</feature>
<feature type="sequence variant" id="VAR_070800" description="In dbSNP:rs62073349." evidence="3">
    <original>I</original>
    <variation>T</variation>
    <location>
        <position position="1281"/>
    </location>
</feature>
<feature type="sequence variant" id="VAR_070801" description="In dbSNP:rs1969205." evidence="3">
    <original>N</original>
    <variation>K</variation>
    <location>
        <position position="1385"/>
    </location>
</feature>
<feature type="sequence variant" id="VAR_070802" description="In dbSNP:rs201103889." evidence="3">
    <original>H</original>
    <variation>P</variation>
    <location>
        <position position="1423"/>
    </location>
</feature>
<feature type="sequence conflict" description="In Ref. 2; AAI44428." evidence="4" ref="2">
    <original>A</original>
    <variation>T</variation>
    <location>
        <position position="1508"/>
    </location>
</feature>
<feature type="sequence conflict" description="In Ref. 2; AAI44428." evidence="4" ref="2">
    <original>W</original>
    <variation>R</variation>
    <location>
        <position position="1628"/>
    </location>
</feature>
<feature type="sequence conflict" description="In Ref. 2; AAI44428." evidence="4" ref="2">
    <location>
        <begin position="1686"/>
        <end position="1687"/>
    </location>
</feature>
<accession>A6NM11</accession>
<accession>B7ZMC3</accession>
<organism>
    <name type="scientific">Homo sapiens</name>
    <name type="common">Human</name>
    <dbReference type="NCBI Taxonomy" id="9606"/>
    <lineage>
        <taxon>Eukaryota</taxon>
        <taxon>Metazoa</taxon>
        <taxon>Chordata</taxon>
        <taxon>Craniata</taxon>
        <taxon>Vertebrata</taxon>
        <taxon>Euteleostomi</taxon>
        <taxon>Mammalia</taxon>
        <taxon>Eutheria</taxon>
        <taxon>Euarchontoglires</taxon>
        <taxon>Primates</taxon>
        <taxon>Haplorrhini</taxon>
        <taxon>Catarrhini</taxon>
        <taxon>Hominidae</taxon>
        <taxon>Homo</taxon>
    </lineage>
</organism>
<evidence type="ECO:0000255" key="1"/>
<evidence type="ECO:0000256" key="2">
    <source>
        <dbReference type="SAM" id="MobiDB-lite"/>
    </source>
</evidence>
<evidence type="ECO:0000269" key="3">
    <source>
    </source>
</evidence>
<evidence type="ECO:0000305" key="4"/>
<reference key="1">
    <citation type="journal article" date="2006" name="Nature">
        <title>DNA sequence of human chromosome 17 and analysis of rearrangement in the human lineage.</title>
        <authorList>
            <person name="Zody M.C."/>
            <person name="Garber M."/>
            <person name="Adams D.J."/>
            <person name="Sharpe T."/>
            <person name="Harrow J."/>
            <person name="Lupski J.R."/>
            <person name="Nicholson C."/>
            <person name="Searle S.M."/>
            <person name="Wilming L."/>
            <person name="Young S.K."/>
            <person name="Abouelleil A."/>
            <person name="Allen N.R."/>
            <person name="Bi W."/>
            <person name="Bloom T."/>
            <person name="Borowsky M.L."/>
            <person name="Bugalter B.E."/>
            <person name="Butler J."/>
            <person name="Chang J.L."/>
            <person name="Chen C.-K."/>
            <person name="Cook A."/>
            <person name="Corum B."/>
            <person name="Cuomo C.A."/>
            <person name="de Jong P.J."/>
            <person name="DeCaprio D."/>
            <person name="Dewar K."/>
            <person name="FitzGerald M."/>
            <person name="Gilbert J."/>
            <person name="Gibson R."/>
            <person name="Gnerre S."/>
            <person name="Goldstein S."/>
            <person name="Grafham D.V."/>
            <person name="Grocock R."/>
            <person name="Hafez N."/>
            <person name="Hagopian D.S."/>
            <person name="Hart E."/>
            <person name="Norman C.H."/>
            <person name="Humphray S."/>
            <person name="Jaffe D.B."/>
            <person name="Jones M."/>
            <person name="Kamal M."/>
            <person name="Khodiyar V.K."/>
            <person name="LaButti K."/>
            <person name="Laird G."/>
            <person name="Lehoczky J."/>
            <person name="Liu X."/>
            <person name="Lokyitsang T."/>
            <person name="Loveland J."/>
            <person name="Lui A."/>
            <person name="Macdonald P."/>
            <person name="Major J.E."/>
            <person name="Matthews L."/>
            <person name="Mauceli E."/>
            <person name="McCarroll S.A."/>
            <person name="Mihalev A.H."/>
            <person name="Mudge J."/>
            <person name="Nguyen C."/>
            <person name="Nicol R."/>
            <person name="O'Leary S.B."/>
            <person name="Osoegawa K."/>
            <person name="Schwartz D.C."/>
            <person name="Shaw-Smith C."/>
            <person name="Stankiewicz P."/>
            <person name="Steward C."/>
            <person name="Swarbreck D."/>
            <person name="Venkataraman V."/>
            <person name="Whittaker C.A."/>
            <person name="Yang X."/>
            <person name="Zimmer A.R."/>
            <person name="Bradley A."/>
            <person name="Hubbard T."/>
            <person name="Birren B.W."/>
            <person name="Rogers J."/>
            <person name="Lander E.S."/>
            <person name="Nusbaum C."/>
        </authorList>
    </citation>
    <scope>NUCLEOTIDE SEQUENCE [LARGE SCALE GENOMIC DNA]</scope>
</reference>
<reference key="2">
    <citation type="journal article" date="2004" name="Genome Res.">
        <title>The status, quality, and expansion of the NIH full-length cDNA project: the Mammalian Gene Collection (MGC).</title>
        <authorList>
            <consortium name="The MGC Project Team"/>
        </authorList>
    </citation>
    <scope>NUCLEOTIDE SEQUENCE [LARGE SCALE MRNA] OF 779-1700</scope>
    <scope>VARIANTS LEU-1141; THR-1281; LYS-1385 AND PRO-1423</scope>
</reference>
<keyword id="KW-0325">Glycoprotein</keyword>
<keyword id="KW-0433">Leucine-rich repeat</keyword>
<keyword id="KW-0472">Membrane</keyword>
<keyword id="KW-1267">Proteomics identification</keyword>
<keyword id="KW-1185">Reference proteome</keyword>
<keyword id="KW-0677">Repeat</keyword>
<keyword id="KW-0732">Signal</keyword>
<keyword id="KW-0812">Transmembrane</keyword>
<keyword id="KW-1133">Transmembrane helix</keyword>